<evidence type="ECO:0000250" key="1"/>
<evidence type="ECO:0000255" key="2">
    <source>
        <dbReference type="HAMAP-Rule" id="MF_00368"/>
    </source>
</evidence>
<evidence type="ECO:0000305" key="3"/>
<name>RL7_STRR6</name>
<proteinExistence type="inferred from homology"/>
<keyword id="KW-1185">Reference proteome</keyword>
<keyword id="KW-0687">Ribonucleoprotein</keyword>
<keyword id="KW-0689">Ribosomal protein</keyword>
<comment type="function">
    <text evidence="2">Forms part of the ribosomal stalk which helps the ribosome interact with GTP-bound translation factors. Is thus essential for accurate translation.</text>
</comment>
<comment type="subunit">
    <text evidence="2">Homodimer. Part of the ribosomal stalk of the 50S ribosomal subunit. Forms a multimeric L10(L12)X complex, where L10 forms an elongated spine to which 2 to 4 L12 dimers bind in a sequential fashion. Binds GTP-bound translation factors.</text>
</comment>
<comment type="similarity">
    <text evidence="2">Belongs to the bacterial ribosomal protein bL12 family.</text>
</comment>
<comment type="sequence caution" evidence="3">
    <conflict type="erroneous initiation">
        <sequence resource="EMBL-CDS" id="AAL00015"/>
    </conflict>
</comment>
<dbReference type="EMBL" id="AE007317">
    <property type="protein sequence ID" value="AAL00015.1"/>
    <property type="status" value="ALT_INIT"/>
    <property type="molecule type" value="Genomic_DNA"/>
</dbReference>
<dbReference type="PIR" id="B98023">
    <property type="entry name" value="B98023"/>
</dbReference>
<dbReference type="RefSeq" id="NP_358804.2">
    <property type="nucleotide sequence ID" value="NC_003098.1"/>
</dbReference>
<dbReference type="RefSeq" id="WP_001196960.1">
    <property type="nucleotide sequence ID" value="NC_003098.1"/>
</dbReference>
<dbReference type="SMR" id="P0A472"/>
<dbReference type="STRING" id="171101.spr1211"/>
<dbReference type="GeneID" id="45653386"/>
<dbReference type="KEGG" id="spr:spr1211"/>
<dbReference type="PATRIC" id="fig|171101.6.peg.1314"/>
<dbReference type="eggNOG" id="COG0222">
    <property type="taxonomic scope" value="Bacteria"/>
</dbReference>
<dbReference type="HOGENOM" id="CLU_086499_3_2_9"/>
<dbReference type="PRO" id="PR:P0A472"/>
<dbReference type="Proteomes" id="UP000000586">
    <property type="component" value="Chromosome"/>
</dbReference>
<dbReference type="GO" id="GO:0022625">
    <property type="term" value="C:cytosolic large ribosomal subunit"/>
    <property type="evidence" value="ECO:0000318"/>
    <property type="project" value="GO_Central"/>
</dbReference>
<dbReference type="GO" id="GO:0003729">
    <property type="term" value="F:mRNA binding"/>
    <property type="evidence" value="ECO:0000318"/>
    <property type="project" value="GO_Central"/>
</dbReference>
<dbReference type="GO" id="GO:0003735">
    <property type="term" value="F:structural constituent of ribosome"/>
    <property type="evidence" value="ECO:0000318"/>
    <property type="project" value="GO_Central"/>
</dbReference>
<dbReference type="GO" id="GO:0006412">
    <property type="term" value="P:translation"/>
    <property type="evidence" value="ECO:0000318"/>
    <property type="project" value="GO_Central"/>
</dbReference>
<dbReference type="CDD" id="cd00387">
    <property type="entry name" value="Ribosomal_L7_L12"/>
    <property type="match status" value="1"/>
</dbReference>
<dbReference type="FunFam" id="1.20.5.710:FF:000002">
    <property type="entry name" value="50S ribosomal protein L7/L12"/>
    <property type="match status" value="1"/>
</dbReference>
<dbReference type="FunFam" id="3.30.1390.10:FF:000001">
    <property type="entry name" value="50S ribosomal protein L7/L12"/>
    <property type="match status" value="1"/>
</dbReference>
<dbReference type="Gene3D" id="3.30.1390.10">
    <property type="match status" value="1"/>
</dbReference>
<dbReference type="Gene3D" id="1.20.5.710">
    <property type="entry name" value="Single helix bin"/>
    <property type="match status" value="1"/>
</dbReference>
<dbReference type="HAMAP" id="MF_00368">
    <property type="entry name" value="Ribosomal_bL12"/>
    <property type="match status" value="1"/>
</dbReference>
<dbReference type="InterPro" id="IPR000206">
    <property type="entry name" value="Ribosomal_bL12"/>
</dbReference>
<dbReference type="InterPro" id="IPR013823">
    <property type="entry name" value="Ribosomal_bL12_C"/>
</dbReference>
<dbReference type="InterPro" id="IPR014719">
    <property type="entry name" value="Ribosomal_bL12_C/ClpS-like"/>
</dbReference>
<dbReference type="InterPro" id="IPR008932">
    <property type="entry name" value="Ribosomal_bL12_oligo"/>
</dbReference>
<dbReference type="InterPro" id="IPR036235">
    <property type="entry name" value="Ribosomal_bL12_oligo_N_sf"/>
</dbReference>
<dbReference type="NCBIfam" id="TIGR00855">
    <property type="entry name" value="L12"/>
    <property type="match status" value="1"/>
</dbReference>
<dbReference type="PANTHER" id="PTHR45987">
    <property type="entry name" value="39S RIBOSOMAL PROTEIN L12"/>
    <property type="match status" value="1"/>
</dbReference>
<dbReference type="PANTHER" id="PTHR45987:SF4">
    <property type="entry name" value="LARGE RIBOSOMAL SUBUNIT PROTEIN BL12M"/>
    <property type="match status" value="1"/>
</dbReference>
<dbReference type="Pfam" id="PF00542">
    <property type="entry name" value="Ribosomal_L12"/>
    <property type="match status" value="1"/>
</dbReference>
<dbReference type="Pfam" id="PF16320">
    <property type="entry name" value="Ribosomal_L12_N"/>
    <property type="match status" value="1"/>
</dbReference>
<dbReference type="SUPFAM" id="SSF54736">
    <property type="entry name" value="ClpS-like"/>
    <property type="match status" value="1"/>
</dbReference>
<dbReference type="SUPFAM" id="SSF48300">
    <property type="entry name" value="Ribosomal protein L7/12, oligomerisation (N-terminal) domain"/>
    <property type="match status" value="1"/>
</dbReference>
<organism>
    <name type="scientific">Streptococcus pneumoniae (strain ATCC BAA-255 / R6)</name>
    <dbReference type="NCBI Taxonomy" id="171101"/>
    <lineage>
        <taxon>Bacteria</taxon>
        <taxon>Bacillati</taxon>
        <taxon>Bacillota</taxon>
        <taxon>Bacilli</taxon>
        <taxon>Lactobacillales</taxon>
        <taxon>Streptococcaceae</taxon>
        <taxon>Streptococcus</taxon>
    </lineage>
</organism>
<feature type="initiator methionine" description="Removed" evidence="1">
    <location>
        <position position="1"/>
    </location>
</feature>
<feature type="chain" id="PRO_0000157589" description="Large ribosomal subunit protein bL12">
    <location>
        <begin position="2"/>
        <end position="122"/>
    </location>
</feature>
<sequence length="122" mass="12442">MALNIENIIAEIKEASILELNDLVKAIEEEFGVTAAAPVAVAAADAADAGAAKDSFDVELTSAGDKKVGVIKVVREITGLGLKEAKELVDGAPALVKEGVATAEAEEIKAKLEEAGASVTLK</sequence>
<protein>
    <recommendedName>
        <fullName evidence="2">Large ribosomal subunit protein bL12</fullName>
    </recommendedName>
    <alternativeName>
        <fullName evidence="3">50S ribosomal protein L7/L12</fullName>
    </alternativeName>
</protein>
<gene>
    <name evidence="2" type="primary">rplL</name>
    <name type="ordered locus">spr1211</name>
</gene>
<reference key="1">
    <citation type="journal article" date="2001" name="J. Bacteriol.">
        <title>Genome of the bacterium Streptococcus pneumoniae strain R6.</title>
        <authorList>
            <person name="Hoskins J."/>
            <person name="Alborn W.E. Jr."/>
            <person name="Arnold J."/>
            <person name="Blaszczak L.C."/>
            <person name="Burgett S."/>
            <person name="DeHoff B.S."/>
            <person name="Estrem S.T."/>
            <person name="Fritz L."/>
            <person name="Fu D.-J."/>
            <person name="Fuller W."/>
            <person name="Geringer C."/>
            <person name="Gilmour R."/>
            <person name="Glass J.S."/>
            <person name="Khoja H."/>
            <person name="Kraft A.R."/>
            <person name="Lagace R.E."/>
            <person name="LeBlanc D.J."/>
            <person name="Lee L.N."/>
            <person name="Lefkowitz E.J."/>
            <person name="Lu J."/>
            <person name="Matsushima P."/>
            <person name="McAhren S.M."/>
            <person name="McHenney M."/>
            <person name="McLeaster K."/>
            <person name="Mundy C.W."/>
            <person name="Nicas T.I."/>
            <person name="Norris F.H."/>
            <person name="O'Gara M."/>
            <person name="Peery R.B."/>
            <person name="Robertson G.T."/>
            <person name="Rockey P."/>
            <person name="Sun P.-M."/>
            <person name="Winkler M.E."/>
            <person name="Yang Y."/>
            <person name="Young-Bellido M."/>
            <person name="Zhao G."/>
            <person name="Zook C.A."/>
            <person name="Baltz R.H."/>
            <person name="Jaskunas S.R."/>
            <person name="Rosteck P.R. Jr."/>
            <person name="Skatrud P.L."/>
            <person name="Glass J.I."/>
        </authorList>
    </citation>
    <scope>NUCLEOTIDE SEQUENCE [LARGE SCALE GENOMIC DNA]</scope>
    <source>
        <strain>ATCC BAA-255 / R6</strain>
    </source>
</reference>
<accession>P0A472</accession>
<accession>P80714</accession>